<name>POL_HV1U4</name>
<evidence type="ECO:0000250" key="1"/>
<evidence type="ECO:0000250" key="2">
    <source>
        <dbReference type="UniProtKB" id="P03347"/>
    </source>
</evidence>
<evidence type="ECO:0000250" key="3">
    <source>
        <dbReference type="UniProtKB" id="P03366"/>
    </source>
</evidence>
<evidence type="ECO:0000250" key="4">
    <source>
        <dbReference type="UniProtKB" id="P03367"/>
    </source>
</evidence>
<evidence type="ECO:0000250" key="5">
    <source>
        <dbReference type="UniProtKB" id="P04585"/>
    </source>
</evidence>
<evidence type="ECO:0000250" key="6">
    <source>
        <dbReference type="UniProtKB" id="P12493"/>
    </source>
</evidence>
<evidence type="ECO:0000250" key="7">
    <source>
        <dbReference type="UniProtKB" id="P12497"/>
    </source>
</evidence>
<evidence type="ECO:0000255" key="8"/>
<evidence type="ECO:0000255" key="9">
    <source>
        <dbReference type="PROSITE-ProRule" id="PRU00047"/>
    </source>
</evidence>
<evidence type="ECO:0000255" key="10">
    <source>
        <dbReference type="PROSITE-ProRule" id="PRU00275"/>
    </source>
</evidence>
<evidence type="ECO:0000255" key="11">
    <source>
        <dbReference type="PROSITE-ProRule" id="PRU00405"/>
    </source>
</evidence>
<evidence type="ECO:0000255" key="12">
    <source>
        <dbReference type="PROSITE-ProRule" id="PRU00408"/>
    </source>
</evidence>
<evidence type="ECO:0000255" key="13">
    <source>
        <dbReference type="PROSITE-ProRule" id="PRU00450"/>
    </source>
</evidence>
<evidence type="ECO:0000255" key="14">
    <source>
        <dbReference type="PROSITE-ProRule" id="PRU00457"/>
    </source>
</evidence>
<evidence type="ECO:0000255" key="15">
    <source>
        <dbReference type="PROSITE-ProRule" id="PRU00506"/>
    </source>
</evidence>
<evidence type="ECO:0000255" key="16">
    <source>
        <dbReference type="PROSITE-ProRule" id="PRU10094"/>
    </source>
</evidence>
<evidence type="ECO:0000256" key="17">
    <source>
        <dbReference type="SAM" id="MobiDB-lite"/>
    </source>
</evidence>
<evidence type="ECO:0000305" key="18"/>
<evidence type="ECO:0007829" key="19">
    <source>
        <dbReference type="PDB" id="1NCP"/>
    </source>
</evidence>
<evidence type="ECO:0007829" key="20">
    <source>
        <dbReference type="PDB" id="3LZU"/>
    </source>
</evidence>
<protein>
    <recommendedName>
        <fullName>Gag-Pol polyprotein</fullName>
    </recommendedName>
    <alternativeName>
        <fullName>Pr160Gag-Pol</fullName>
    </alternativeName>
    <component>
        <recommendedName>
            <fullName>Matrix protein p17</fullName>
            <shortName>MA</shortName>
        </recommendedName>
    </component>
    <component>
        <recommendedName>
            <fullName>Capsid protein p24</fullName>
            <shortName>CA</shortName>
        </recommendedName>
    </component>
    <component>
        <recommendedName>
            <fullName evidence="7">Spacer peptide 1</fullName>
            <shortName>SP1</shortName>
        </recommendedName>
        <alternativeName>
            <fullName>p2</fullName>
        </alternativeName>
    </component>
    <component>
        <recommendedName>
            <fullName>Nucleocapsid protein p7</fullName>
            <shortName>NC</shortName>
        </recommendedName>
    </component>
    <component>
        <recommendedName>
            <fullName>Transframe peptide</fullName>
            <shortName>TF</shortName>
        </recommendedName>
    </component>
    <component>
        <recommendedName>
            <fullName>p6-pol</fullName>
            <shortName>p6*</shortName>
        </recommendedName>
    </component>
    <component>
        <recommendedName>
            <fullName>Protease</fullName>
            <ecNumber>3.4.23.16</ecNumber>
        </recommendedName>
        <alternativeName>
            <fullName>PR</fullName>
        </alternativeName>
        <alternativeName>
            <fullName>Retropepsin</fullName>
        </alternativeName>
    </component>
    <component>
        <recommendedName>
            <fullName>Reverse transcriptase/ribonuclease H</fullName>
            <ecNumber>2.7.7.49</ecNumber>
            <ecNumber>2.7.7.7</ecNumber>
            <ecNumber>3.1.26.13</ecNumber>
        </recommendedName>
        <alternativeName>
            <fullName>Exoribonuclease H</fullName>
            <ecNumber>3.1.13.2</ecNumber>
        </alternativeName>
        <alternativeName>
            <fullName>p66 RT</fullName>
        </alternativeName>
    </component>
    <component>
        <recommendedName>
            <fullName>p51 RT</fullName>
        </recommendedName>
    </component>
    <component>
        <recommendedName>
            <fullName>p15</fullName>
        </recommendedName>
    </component>
    <component>
        <recommendedName>
            <fullName>Integrase</fullName>
            <shortName>IN</shortName>
            <ecNumber evidence="5">2.7.7.-</ecNumber>
            <ecNumber evidence="5">3.1.-.-</ecNumber>
        </recommendedName>
    </component>
</protein>
<proteinExistence type="evidence at protein level"/>
<feature type="initiator methionine" description="Removed; by host" evidence="1">
    <location>
        <position position="1"/>
    </location>
</feature>
<feature type="chain" id="PRO_0000261282" description="Gag-Pol polyprotein">
    <location>
        <begin position="2"/>
        <end position="1428"/>
    </location>
</feature>
<feature type="chain" id="PRO_0000042430" description="Matrix protein p17" evidence="1">
    <location>
        <begin position="2"/>
        <end position="128"/>
    </location>
</feature>
<feature type="chain" id="PRO_0000042431" description="Capsid protein p24" evidence="1">
    <location>
        <begin position="129"/>
        <end position="359"/>
    </location>
</feature>
<feature type="peptide" id="PRO_0000042432" description="Spacer peptide 1" evidence="1">
    <location>
        <begin position="360"/>
        <end position="371"/>
    </location>
</feature>
<feature type="chain" id="PRO_0000042433" description="Nucleocapsid protein p7" evidence="1">
    <location>
        <begin position="372"/>
        <end position="426"/>
    </location>
</feature>
<feature type="peptide" id="PRO_0000246732" description="Transframe peptide" evidence="8">
    <location>
        <begin position="427"/>
        <end position="434"/>
    </location>
</feature>
<feature type="chain" id="PRO_0000042434" description="p6-pol" evidence="8">
    <location>
        <begin position="435"/>
        <end position="481"/>
    </location>
</feature>
<feature type="chain" id="PRO_0000038664" description="Protease" evidence="1">
    <location>
        <begin position="482"/>
        <end position="580"/>
    </location>
</feature>
<feature type="chain" id="PRO_0000042435" description="Reverse transcriptase/ribonuclease H" evidence="1">
    <location>
        <begin position="581"/>
        <end position="1140"/>
    </location>
</feature>
<feature type="chain" id="PRO_0000042436" description="p51 RT" evidence="1">
    <location>
        <begin position="581"/>
        <end position="1020"/>
    </location>
</feature>
<feature type="chain" id="PRO_0000042437" description="p15" evidence="1">
    <location>
        <begin position="1021"/>
        <end position="1140"/>
    </location>
</feature>
<feature type="chain" id="PRO_0000042438" description="Integrase" evidence="1">
    <location>
        <begin position="1141"/>
        <end position="1428"/>
    </location>
</feature>
<feature type="domain" description="Peptidase A2" evidence="10">
    <location>
        <begin position="501"/>
        <end position="570"/>
    </location>
</feature>
<feature type="domain" description="Reverse transcriptase" evidence="11">
    <location>
        <begin position="624"/>
        <end position="814"/>
    </location>
</feature>
<feature type="domain" description="RNase H type-1" evidence="12">
    <location>
        <begin position="1014"/>
        <end position="1137"/>
    </location>
</feature>
<feature type="domain" description="Integrase catalytic" evidence="14">
    <location>
        <begin position="1194"/>
        <end position="1344"/>
    </location>
</feature>
<feature type="zinc finger region" description="CCHC-type 1" evidence="9">
    <location>
        <begin position="384"/>
        <end position="401"/>
    </location>
</feature>
<feature type="zinc finger region" description="CCHC-type 2" evidence="9">
    <location>
        <begin position="405"/>
        <end position="422"/>
    </location>
</feature>
<feature type="zinc finger region" description="Integrase-type" evidence="13">
    <location>
        <begin position="1143"/>
        <end position="1184"/>
    </location>
</feature>
<feature type="DNA-binding region" description="Integrase-type" evidence="15">
    <location>
        <begin position="1363"/>
        <end position="1410"/>
    </location>
</feature>
<feature type="region of interest" description="Interaction with Gp41" evidence="7">
    <location>
        <begin position="7"/>
        <end position="31"/>
    </location>
</feature>
<feature type="region of interest" description="Interaction with host CALM1" evidence="5">
    <location>
        <begin position="8"/>
        <end position="43"/>
    </location>
</feature>
<feature type="region of interest" description="Interaction with host AP3D1" evidence="7">
    <location>
        <begin position="12"/>
        <end position="19"/>
    </location>
</feature>
<feature type="region of interest" description="Interaction with membrane phosphatidylinositol 4,5-bisphosphate and RNA" evidence="7">
    <location>
        <begin position="14"/>
        <end position="33"/>
    </location>
</feature>
<feature type="region of interest" description="Interaction with membrane phosphatidylinositol 4,5-bisphosphate" evidence="7">
    <location>
        <begin position="73"/>
        <end position="77"/>
    </location>
</feature>
<feature type="region of interest" description="Disordered" evidence="17">
    <location>
        <begin position="108"/>
        <end position="130"/>
    </location>
</feature>
<feature type="region of interest" description="Interaction with human PPIA/CYPA and NUP153" evidence="7">
    <location>
        <begin position="185"/>
        <end position="223"/>
    </location>
</feature>
<feature type="region of interest" description="Dimerization/Multimerization of capsid protein p24" evidence="5">
    <location>
        <begin position="273"/>
        <end position="359"/>
    </location>
</feature>
<feature type="region of interest" description="Disordered" evidence="17">
    <location>
        <begin position="438"/>
        <end position="475"/>
    </location>
</feature>
<feature type="region of interest" description="Dimerization of protease" evidence="5">
    <location>
        <begin position="482"/>
        <end position="486"/>
    </location>
</feature>
<feature type="region of interest" description="Dimerization of protease" evidence="5">
    <location>
        <begin position="530"/>
        <end position="536"/>
    </location>
</feature>
<feature type="region of interest" description="Dimerization of protease" evidence="5">
    <location>
        <begin position="569"/>
        <end position="581"/>
    </location>
</feature>
<feature type="region of interest" description="RT 'primer grip'" evidence="1">
    <location>
        <begin position="807"/>
        <end position="815"/>
    </location>
</feature>
<feature type="short sequence motif" description="Nuclear export signal" evidence="1">
    <location>
        <begin position="16"/>
        <end position="22"/>
    </location>
</feature>
<feature type="short sequence motif" description="Nuclear localization signal" evidence="1">
    <location>
        <begin position="26"/>
        <end position="32"/>
    </location>
</feature>
<feature type="short sequence motif" description="Tryptophan repeat motif" evidence="1">
    <location>
        <begin position="978"/>
        <end position="994"/>
    </location>
</feature>
<feature type="compositionally biased region" description="Polar residues" evidence="17">
    <location>
        <begin position="114"/>
        <end position="130"/>
    </location>
</feature>
<feature type="compositionally biased region" description="Polar residues" evidence="17">
    <location>
        <begin position="444"/>
        <end position="456"/>
    </location>
</feature>
<feature type="compositionally biased region" description="Basic and acidic residues" evidence="17">
    <location>
        <begin position="460"/>
        <end position="475"/>
    </location>
</feature>
<feature type="active site" description="For protease activity; shared with dimeric partner" evidence="16">
    <location>
        <position position="506"/>
    </location>
</feature>
<feature type="binding site" evidence="1">
    <location>
        <position position="690"/>
    </location>
    <ligand>
        <name>Mg(2+)</name>
        <dbReference type="ChEBI" id="CHEBI:18420"/>
        <label>1</label>
        <note>catalytic; for reverse transcriptase activity</note>
    </ligand>
</feature>
<feature type="binding site" evidence="1">
    <location>
        <position position="765"/>
    </location>
    <ligand>
        <name>Mg(2+)</name>
        <dbReference type="ChEBI" id="CHEBI:18420"/>
        <label>1</label>
        <note>catalytic; for reverse transcriptase activity</note>
    </ligand>
</feature>
<feature type="binding site" evidence="1">
    <location>
        <position position="766"/>
    </location>
    <ligand>
        <name>Mg(2+)</name>
        <dbReference type="ChEBI" id="CHEBI:18420"/>
        <label>1</label>
        <note>catalytic; for reverse transcriptase activity</note>
    </ligand>
</feature>
<feature type="binding site" evidence="1">
    <location>
        <position position="1023"/>
    </location>
    <ligand>
        <name>Mg(2+)</name>
        <dbReference type="ChEBI" id="CHEBI:18420"/>
        <label>2</label>
        <note>catalytic; for RNase H activity</note>
    </ligand>
</feature>
<feature type="binding site" evidence="1">
    <location>
        <position position="1058"/>
    </location>
    <ligand>
        <name>Mg(2+)</name>
        <dbReference type="ChEBI" id="CHEBI:18420"/>
        <label>2</label>
        <note>catalytic; for RNase H activity</note>
    </ligand>
</feature>
<feature type="binding site" evidence="1">
    <location>
        <position position="1078"/>
    </location>
    <ligand>
        <name>Mg(2+)</name>
        <dbReference type="ChEBI" id="CHEBI:18420"/>
        <label>2</label>
        <note>catalytic; for RNase H activity</note>
    </ligand>
</feature>
<feature type="binding site" evidence="1">
    <location>
        <position position="1129"/>
    </location>
    <ligand>
        <name>Mg(2+)</name>
        <dbReference type="ChEBI" id="CHEBI:18420"/>
        <label>2</label>
        <note>catalytic; for RNase H activity</note>
    </ligand>
</feature>
<feature type="binding site" evidence="13">
    <location>
        <position position="1152"/>
    </location>
    <ligand>
        <name>Zn(2+)</name>
        <dbReference type="ChEBI" id="CHEBI:29105"/>
    </ligand>
</feature>
<feature type="binding site" evidence="13">
    <location>
        <position position="1156"/>
    </location>
    <ligand>
        <name>Zn(2+)</name>
        <dbReference type="ChEBI" id="CHEBI:29105"/>
    </ligand>
</feature>
<feature type="binding site" evidence="13">
    <location>
        <position position="1180"/>
    </location>
    <ligand>
        <name>Zn(2+)</name>
        <dbReference type="ChEBI" id="CHEBI:29105"/>
    </ligand>
</feature>
<feature type="binding site" evidence="13">
    <location>
        <position position="1183"/>
    </location>
    <ligand>
        <name>Zn(2+)</name>
        <dbReference type="ChEBI" id="CHEBI:29105"/>
    </ligand>
</feature>
<feature type="binding site" evidence="1">
    <location>
        <position position="1204"/>
    </location>
    <ligand>
        <name>Mg(2+)</name>
        <dbReference type="ChEBI" id="CHEBI:18420"/>
        <label>3</label>
        <note>catalytic; for integrase activity</note>
    </ligand>
</feature>
<feature type="binding site" evidence="1">
    <location>
        <position position="1256"/>
    </location>
    <ligand>
        <name>Mg(2+)</name>
        <dbReference type="ChEBI" id="CHEBI:18420"/>
        <label>3</label>
        <note>catalytic; for integrase activity</note>
    </ligand>
</feature>
<feature type="binding site" evidence="5">
    <location>
        <position position="1292"/>
    </location>
    <ligand>
        <name>Mg(2+)</name>
        <dbReference type="ChEBI" id="CHEBI:18420"/>
        <label>3</label>
        <note>catalytic; for integrase activity</note>
    </ligand>
</feature>
<feature type="site" description="Cleavage; by viral protease" evidence="1">
    <location>
        <begin position="128"/>
        <end position="129"/>
    </location>
</feature>
<feature type="site" description="Cis/trans isomerization of proline peptide bond; by human PPIA/CYPA" evidence="1">
    <location>
        <begin position="217"/>
        <end position="218"/>
    </location>
</feature>
<feature type="site" description="Cleavage; by viral protease" evidence="1">
    <location>
        <begin position="359"/>
        <end position="360"/>
    </location>
</feature>
<feature type="site" description="Cleavage; by viral protease" evidence="1">
    <location>
        <begin position="371"/>
        <end position="372"/>
    </location>
</feature>
<feature type="site" description="Cleavage; by viral protease" evidence="8">
    <location>
        <begin position="426"/>
        <end position="427"/>
    </location>
</feature>
<feature type="site" description="Cleavage; by viral protease" evidence="1">
    <location>
        <begin position="434"/>
        <end position="435"/>
    </location>
</feature>
<feature type="site" description="Cleavage; by viral protease" evidence="1">
    <location>
        <begin position="481"/>
        <end position="482"/>
    </location>
</feature>
<feature type="site" description="Cleavage; by viral protease" evidence="1">
    <location>
        <begin position="580"/>
        <end position="581"/>
    </location>
</feature>
<feature type="site" description="Essential for RT p66/p51 heterodimerization" evidence="1">
    <location>
        <position position="981"/>
    </location>
</feature>
<feature type="site" description="Essential for RT p66/p51 heterodimerization" evidence="1">
    <location>
        <position position="994"/>
    </location>
</feature>
<feature type="site" description="Cleavage; by viral protease; partial" evidence="1">
    <location>
        <begin position="1020"/>
        <end position="1021"/>
    </location>
</feature>
<feature type="site" description="Cleavage; by viral protease" evidence="1">
    <location>
        <begin position="1140"/>
        <end position="1141"/>
    </location>
</feature>
<feature type="modified residue" description="Phosphotyrosine; by host" evidence="1">
    <location>
        <position position="128"/>
    </location>
</feature>
<feature type="lipid moiety-binding region" description="N-myristoyl glycine; by host" evidence="1">
    <location>
        <position position="2"/>
    </location>
</feature>
<feature type="strand" evidence="19">
    <location>
        <begin position="407"/>
        <end position="420"/>
    </location>
</feature>
<feature type="strand" evidence="20">
    <location>
        <begin position="486"/>
        <end position="488"/>
    </location>
</feature>
<feature type="strand" evidence="20">
    <location>
        <begin position="491"/>
        <end position="496"/>
    </location>
</feature>
<feature type="strand" evidence="20">
    <location>
        <begin position="499"/>
        <end position="505"/>
    </location>
</feature>
<feature type="strand" evidence="20">
    <location>
        <begin position="510"/>
        <end position="516"/>
    </location>
</feature>
<feature type="strand" evidence="20">
    <location>
        <begin position="524"/>
        <end position="530"/>
    </location>
</feature>
<feature type="strand" evidence="20">
    <location>
        <begin position="533"/>
        <end position="547"/>
    </location>
</feature>
<feature type="strand" evidence="20">
    <location>
        <begin position="550"/>
        <end position="559"/>
    </location>
</feature>
<feature type="helix" evidence="20">
    <location>
        <begin position="568"/>
        <end position="571"/>
    </location>
</feature>
<feature type="helix" evidence="20">
    <location>
        <begin position="572"/>
        <end position="574"/>
    </location>
</feature>
<feature type="strand" evidence="20">
    <location>
        <begin position="577"/>
        <end position="579"/>
    </location>
</feature>
<comment type="function">
    <molecule>Gag-Pol polyprotein</molecule>
    <text evidence="1">Mediates, with Gag polyprotein, the essential events in virion assembly, including binding the plasma membrane, making the protein-protein interactions necessary to create spherical particles, recruiting the viral Env proteins, and packaging the genomic RNA via direct interactions with the RNA packaging sequence (Psi). Gag-Pol polyprotein may regulate its own translation, by the binding genomic RNA in the 5'-UTR. At low concentration, the polyprotein would promote translation, whereas at high concentration, the polyprotein would encapsidate genomic RNA and then shut off translation.</text>
</comment>
<comment type="function">
    <molecule>Matrix protein p17</molecule>
    <text evidence="7">Targets the polyprotein to the plasma membrane via a multipartite membrane-binding signal, that includes its myristoylated N-terminus. Matrix protein is part of the pre-integration complex. Implicated in the release from host cell mediated by Vpu. Binds to RNA.</text>
</comment>
<comment type="function">
    <molecule>Capsid protein p24</molecule>
    <text evidence="5 7">Forms the conical core that encapsulates the genomic RNA-nucleocapsid complex in the virion. Most core are conical, with only 7% tubular. The core is constituted by capsid protein hexamer subunits. The core is disassembled soon after virion entry (By similarity). Host restriction factors such as TRIM5-alpha or TRIMCyp bind retroviral capsids and cause premature capsid disassembly, leading to blocks in reverse transcription. Capsid restriction by TRIM5 is one of the factors which restricts HIV-1 to the human species. Host PIN1 apparently facilitates the virion uncoating. On the other hand, interactions with PDZD8 or CYPA stabilize the capsid.</text>
</comment>
<comment type="function">
    <molecule>Nucleocapsid protein p7</molecule>
    <text evidence="5">Encapsulates and protects viral dimeric unspliced genomic RNA (gRNA). Binds these RNAs through its zinc fingers. Acts as a nucleic acid chaperone which is involved in rearangement of nucleic acid secondary structure during gRNA retrotranscription. Also facilitates template switch leading to recombination. As part of the polyprotein, participates in gRNA dimerization, packaging, tRNA incorporation and virion assembly.</text>
</comment>
<comment type="function">
    <molecule>Protease</molecule>
    <text evidence="5 10">Aspartyl protease that mediates proteolytic cleavages of Gag and Gag-Pol polyproteins during or shortly after the release of the virion from the plasma membrane. Cleavages take place as an ordered, step-wise cascade to yield mature proteins. This process is called maturation. Displays maximal activity during the budding process just prior to particle release from the cell. Also cleaves Nef and Vif, probably concomitantly with viral structural proteins on maturation of virus particles. Hydrolyzes host EIF4GI and PABP1 in order to shut off the capped cellular mRNA translation. The resulting inhibition of cellular protein synthesis serves to ensure maximal viral gene expression and to evade host immune response. Also mediates cleavage of host YTHDF3. Mediates cleavage of host CARD8, thereby activating the CARD8 inflammasome, leading to the clearance of latent HIV-1 in patient CD4(+) T-cells after viral reactivation; in contrast, HIV-1 can evade CARD8-sensing when its protease remains inactive in infected cells prior to viral budding (By similarity).</text>
</comment>
<comment type="function">
    <molecule>Reverse transcriptase/ribonuclease H</molecule>
    <text evidence="5">Multifunctional enzyme that converts the viral RNA genome into dsDNA in the cytoplasm, shortly after virus entry into the cell. This enzyme displays a DNA polymerase activity that can copy either DNA or RNA templates, and a ribonuclease H (RNase H) activity that cleaves the RNA strand of RNA-DNA heteroduplexes in a partially processive 3' to 5' endonucleasic mode. Conversion of viral genomic RNA into dsDNA requires many steps. A tRNA(3)-Lys binds to the primer-binding site (PBS) situated at the 5'-end of the viral RNA. RT uses the 3' end of the tRNA primer to perform a short round of RNA-dependent minus-strand DNA synthesis. The reading proceeds through the U5 region and ends after the repeated (R) region which is present at both ends of viral RNA. The portion of the RNA-DNA heteroduplex is digested by the RNase H, resulting in a ssDNA product attached to the tRNA primer. This ssDNA/tRNA hybridizes with the identical R region situated at the 3' end of viral RNA. This template exchange, known as minus-strand DNA strong stop transfer, can be either intra- or intermolecular. RT uses the 3' end of this newly synthesized short ssDNA to perform the RNA-dependent minus-strand DNA synthesis of the whole template. RNase H digests the RNA template except for two polypurine tracts (PPTs) situated at the 5'-end and near the center of the genome. It is not clear if both polymerase and RNase H activities are simultaneous. RNase H probably can proceed both in a polymerase-dependent (RNA cut into small fragments by the same RT performing DNA synthesis) and a polymerase-independent mode (cleavage of remaining RNA fragments by free RTs). Secondly, RT performs DNA-directed plus-strand DNA synthesis using the PPTs that have not been removed by RNase H as primers. PPTs and tRNA primers are then removed by RNase H. The 3' and 5' ssDNA PBS regions hybridize to form a circular dsDNA intermediate. Strand displacement synthesis by RT to the PBS and PPT ends produces a blunt ended, linear dsDNA copy of the viral genome that includes long terminal repeats (LTRs) at both ends.</text>
</comment>
<comment type="function">
    <molecule>Integrase</molecule>
    <text evidence="5">Catalyzes viral DNA integration into the host chromosome, by performing a series of DNA cutting and joining reactions. This enzyme activity takes place after virion entry into a cell and reverse transcription of the RNA genome in dsDNA. The first step in the integration process is 3' processing. This step requires a complex comprising the viral genome, matrix protein, Vpr and integrase. This complex is called the pre-integration complex (PIC). The integrase protein removes 2 nucleotides from each 3' end of the viral DNA, leaving recessed CA OH's at the 3' ends. In the second step, the PIC enters cell nucleus. This process is mediated through integrase and Vpr proteins, and allows the virus to infect a non dividing cell. This ability to enter the nucleus is specific of lentiviruses, other retroviruses cannot and rely on cell division to access cell chromosomes. In the third step, termed strand transfer, the integrase protein joins the previously processed 3' ends to the 5' ends of strands of target cellular DNA at the site of integration. The 5'-ends are produced by integrase-catalyzed staggered cuts, 5 bp apart. A Y-shaped, gapped, recombination intermediate results, with the 5'-ends of the viral DNA strands and the 3' ends of target DNA strands remaining unjoined, flanking a gap of 5 bp. The last step is viral DNA integration into host chromosome. This involves host DNA repair synthesis in which the 5 bp gaps between the unjoined strands are filled in and then ligated. Since this process occurs at both cuts flanking the HIV genome, a 5 bp duplication of host DNA is produced at the ends of HIV-1 integration. Alternatively, Integrase may catalyze the excision of viral DNA just after strand transfer, this is termed disintegration.</text>
</comment>
<comment type="catalytic activity">
    <reaction evidence="10">
        <text>Specific for a P1 residue that is hydrophobic, and P1' variable, but often Pro.</text>
        <dbReference type="EC" id="3.4.23.16"/>
    </reaction>
</comment>
<comment type="catalytic activity">
    <reaction evidence="1">
        <text>Endohydrolysis of RNA in RNA/DNA hybrids. Three different cleavage modes: 1. sequence-specific internal cleavage of RNA. Human immunodeficiency virus type 1 and Moloney murine leukemia virus enzymes prefer to cleave the RNA strand one nucleotide away from the RNA-DNA junction. 2. RNA 5'-end directed cleavage 13-19 nucleotides from the RNA end. 3. DNA 3'-end directed cleavage 15-20 nucleotides away from the primer terminus.</text>
        <dbReference type="EC" id="3.1.26.13"/>
    </reaction>
</comment>
<comment type="catalytic activity">
    <reaction evidence="1">
        <text>3'-end directed exonucleolytic cleavage of viral RNA-DNA hybrid.</text>
        <dbReference type="EC" id="3.1.13.2"/>
    </reaction>
</comment>
<comment type="catalytic activity">
    <reaction evidence="11">
        <text>DNA(n) + a 2'-deoxyribonucleoside 5'-triphosphate = DNA(n+1) + diphosphate</text>
        <dbReference type="Rhea" id="RHEA:22508"/>
        <dbReference type="Rhea" id="RHEA-COMP:17339"/>
        <dbReference type="Rhea" id="RHEA-COMP:17340"/>
        <dbReference type="ChEBI" id="CHEBI:33019"/>
        <dbReference type="ChEBI" id="CHEBI:61560"/>
        <dbReference type="ChEBI" id="CHEBI:173112"/>
        <dbReference type="EC" id="2.7.7.49"/>
    </reaction>
</comment>
<comment type="catalytic activity">
    <reaction evidence="11">
        <text>DNA(n) + a 2'-deoxyribonucleoside 5'-triphosphate = DNA(n+1) + diphosphate</text>
        <dbReference type="Rhea" id="RHEA:22508"/>
        <dbReference type="Rhea" id="RHEA-COMP:17339"/>
        <dbReference type="Rhea" id="RHEA-COMP:17340"/>
        <dbReference type="ChEBI" id="CHEBI:33019"/>
        <dbReference type="ChEBI" id="CHEBI:61560"/>
        <dbReference type="ChEBI" id="CHEBI:173112"/>
        <dbReference type="EC" id="2.7.7.7"/>
    </reaction>
</comment>
<comment type="cofactor">
    <cofactor evidence="1">
        <name>Mg(2+)</name>
        <dbReference type="ChEBI" id="CHEBI:18420"/>
    </cofactor>
    <text evidence="1">Binds 2 magnesium ions for reverse transcriptase polymerase activity.</text>
</comment>
<comment type="cofactor">
    <cofactor evidence="1">
        <name>Mg(2+)</name>
        <dbReference type="ChEBI" id="CHEBI:18420"/>
    </cofactor>
    <text evidence="1">Binds 2 magnesium ions for ribonuclease H (RNase H) activity. Substrate-binding is a precondition for magnesium binding.</text>
</comment>
<comment type="cofactor">
    <cofactor evidence="1">
        <name>Mg(2+)</name>
        <dbReference type="ChEBI" id="CHEBI:18420"/>
    </cofactor>
    <text evidence="1">Magnesium ions are required for integrase activity. Binds at least 1, maybe 2 magnesium ions.</text>
</comment>
<comment type="activity regulation">
    <text evidence="1">Protease: The viral protease is inhibited by many synthetic protease inhibitors (PIs), such as amprenavir, atazanavir, indinavir, loprinavir, nelfinavir, ritonavir and saquinavir. Use of protease inhibitors in tritherapy regimens permit more ambitious therapeutic strategies. Reverse transcriptase/ribonuclease H: RT can be inhibited either by nucleoside RT inhibitors (NRTIs) or by non nucleoside RT inhibitors (NNRTIs). NRTIs act as chain terminators, whereas NNRTIs inhibit DNA polymerization by binding a small hydrophobic pocket near the RT active site and inducing an allosteric change in this region. Classical NRTIs are abacavir, adefovir (PMEA), didanosine (ddI), lamivudine (3TC), stavudine (d4T), tenofovir (PMPA), zalcitabine (ddC), and zidovudine (AZT). Classical NNRTIs are atevirdine (BHAP U-87201E), delavirdine, efavirenz (DMP-266), emivirine (I-EBU), and nevirapine (BI-RG-587). The tritherapies used as a basic effective treatment of AIDS associate two NRTIs and one NNRTI.</text>
</comment>
<comment type="subunit">
    <molecule>Matrix protein p17</molecule>
    <text evidence="5 7">Homotrimer; further assembles as hexamers of trimers (By similarity). Interacts with gp41 (via C-terminus) (By similarity). Interacts with host CALM1; this interaction induces a conformational change in the Matrix protein, triggering exposure of the myristate group (By similarity). Interacts with host AP3D1; this interaction allows the polyprotein trafficking to multivesicular bodies during virus assembly (By similarity). Part of the pre-integration complex (PIC) which is composed of viral genome, matrix protein, Vpr and integrase (By similarity).</text>
</comment>
<comment type="subunit">
    <molecule>Capsid protein p24</molecule>
    <text evidence="5 7">Homodimer; the homodimer further multimerizes as homohexamers or homopentamers. Interacts with human PPIA/CYPA (By similarity); This interaction stabilizes the capsid. Interacts with human NUP153 (By similarity). Interacts with host PDZD8; this interaction stabilizes the capsid (By similarity). Interacts with monkey TRIM5; this interaction destabilizes the capsid (By similarity).</text>
</comment>
<comment type="subunit">
    <molecule>Protease</molecule>
    <text evidence="5 7">Homodimer, whose active site consists of two apposed aspartic acid residues.</text>
</comment>
<comment type="subunit">
    <molecule>Reverse transcriptase/ribonuclease H</molecule>
    <text evidence="3">Heterodimer of p66 RT and p51 RT (RT p66/p51) (By similarity). Heterodimerization of RT is essential for DNA polymerase activity (By similarity). The overall folding of the subdomains is similar in p66 RT and p51 RT but the spatial arrangements of the subdomains are dramatically different (By similarity).</text>
</comment>
<comment type="subunit">
    <molecule>Integrase</molecule>
    <text evidence="4 5 7">Homotetramer; may further associate as a homohexadecamer (By similarity). Part of the pre-integration complex (PIC) which is composed of viral genome, matrix protein, Vpr and integrase. Interacts with human SMARCB1/INI1 and human PSIP1/LEDGF isoform 1. Interacts with human KPNA3; this interaction might play a role in nuclear import of the pre-integration complex (By similarity). Interacts with human NUP153; this interaction might play a role in nuclear import of the pre-integration complex (By similarity).</text>
</comment>
<comment type="subcellular location">
    <molecule>Gag-Pol polyprotein</molecule>
    <subcellularLocation>
        <location>Host cell membrane</location>
        <topology>Lipid-anchor</topology>
    </subcellularLocation>
    <subcellularLocation>
        <location>Host endosome</location>
        <location>Host multivesicular body</location>
    </subcellularLocation>
    <text evidence="7">These locations are linked to virus assembly sites. The main location is the cell membrane, but under some circumstances, late endosomal compartments can serve as productive sites for virion assembly.</text>
</comment>
<comment type="subcellular location">
    <molecule>Matrix protein p17</molecule>
    <subcellularLocation>
        <location>Virion membrane</location>
        <topology evidence="18">Lipid-anchor</topology>
    </subcellularLocation>
    <subcellularLocation>
        <location evidence="1">Host nucleus</location>
    </subcellularLocation>
    <subcellularLocation>
        <location evidence="1">Host cytoplasm</location>
    </subcellularLocation>
</comment>
<comment type="subcellular location">
    <molecule>Capsid protein p24</molecule>
    <subcellularLocation>
        <location evidence="18">Virion</location>
    </subcellularLocation>
</comment>
<comment type="subcellular location">
    <molecule>Nucleocapsid protein p7</molecule>
    <subcellularLocation>
        <location evidence="18">Virion</location>
    </subcellularLocation>
</comment>
<comment type="subcellular location">
    <molecule>Reverse transcriptase/ribonuclease H</molecule>
    <subcellularLocation>
        <location evidence="18">Virion</location>
    </subcellularLocation>
</comment>
<comment type="subcellular location">
    <molecule>Integrase</molecule>
    <subcellularLocation>
        <location evidence="18">Virion</location>
    </subcellularLocation>
    <subcellularLocation>
        <location evidence="18">Host nucleus</location>
    </subcellularLocation>
    <subcellularLocation>
        <location evidence="18">Host cytoplasm</location>
    </subcellularLocation>
    <text evidence="18">Nuclear at initial phase, cytoplasmic at assembly.</text>
</comment>
<comment type="alternative products">
    <event type="ribosomal frameshifting"/>
    <isoform>
        <id>P24740-1</id>
        <name>Gag-Pol polyprotein</name>
        <sequence type="displayed"/>
    </isoform>
    <isoform>
        <id>P24736-1</id>
        <name>Gag polyprotein</name>
        <sequence type="external"/>
    </isoform>
    <text>Translation results in the formation of the Gag polyprotein most of the time. Ribosomal frameshifting at the gag-pol genes boundary occurs at low frequency and produces the Gag-Pol polyprotein. This strategy of translation probably allows the virus to modulate the quantity of each viral protein. Maintenance of a correct Gag to Gag-Pol ratio is essential for RNA dimerization and viral infectivity.</text>
</comment>
<comment type="domain">
    <molecule>Reverse transcriptase/ribonuclease H</molecule>
    <text evidence="1">RT is structured in five subdomains: finger, palm, thumb, connection and RNase H. Within the palm subdomain, the 'primer grip' region is thought to be involved in the positioning of the primer terminus for accommodating the incoming nucleotide. The RNase H domain stabilizes the association of RT with primer-template.</text>
</comment>
<comment type="domain">
    <molecule>Reverse transcriptase/ribonuclease H</molecule>
    <text evidence="1">The tryptophan repeat motif is involved in RT p66/p51 dimerization (By similarity).</text>
</comment>
<comment type="domain">
    <molecule>Integrase</molecule>
    <text evidence="1">The core domain contains the D-x(n)-D-x(35)-E motif, named for the phylogenetically conserved glutamic acid and aspartic acid residues and the invariant 35 amino acid spacing between the second and third acidic residues. Each acidic residue of the D,D(35)E motif is independently essential for the 3'-processing and strand transfer activities of purified integrase protein.</text>
</comment>
<comment type="PTM">
    <molecule>Gag-Pol polyprotein</molecule>
    <text evidence="5 11">Specific enzymatic cleavages by the viral protease yield mature proteins. The protease is released by autocatalytic cleavage. The polyprotein is cleaved during and after budding, this process is termed maturation. Proteolytic cleavage of p66 RT removes the RNase H domain to yield the p51 RT subunit. Nucleocapsid protein p7 might be further cleaved after virus entry.</text>
</comment>
<comment type="PTM">
    <molecule>Matrix protein p17</molecule>
    <text evidence="5">Tyrosine phosphorylated presumably in the virion by a host kinase. Phosphorylation is apparently not a major regulator of membrane association.</text>
</comment>
<comment type="PTM">
    <molecule>Capsid protein p24</molecule>
    <text evidence="6">Phosphorylated possibly by host MAPK1; this phosphorylation is necessary for Pin1-mediated virion uncoating.</text>
</comment>
<comment type="PTM">
    <molecule>Nucleocapsid protein p7</molecule>
    <text evidence="2">Methylated by host PRMT6, impairing its function by reducing RNA annealing and the initiation of reverse transcription.</text>
</comment>
<comment type="miscellaneous">
    <molecule>Reverse transcriptase/ribonuclease H</molecule>
    <text evidence="1">Error-prone enzyme that lacks a proof-reading function. High mutations rate is a direct consequence of this characteristic. RT also displays frequent template switching leading to high recombination rate. Recombination mostly occurs between homologous regions of the two copackaged RNA genomes. If these two RNA molecules derive from different viral strains, reverse transcription will give rise to highly recombinated proviral DNAs.</text>
</comment>
<comment type="miscellaneous">
    <text>HIV-1 lineages are divided in three main groups, M (for Major), O (for Outlier), and N (for New, or Non-M, Non-O). The vast majority of strains found worldwide belong to the group M. Group O seems to be endemic to and largely confined to Cameroon and neighboring countries in West Central Africa, where these viruses represent a small minority of HIV-1 strains. The group N is represented by a limited number of isolates from Cameroonian persons. The group M is further subdivided in 9 clades or subtypes (A to D, F to H, J and K).</text>
</comment>
<comment type="miscellaneous">
    <text>Resistance to inhibitors associated with mutations are observed both in viral protease and in reverse transcriptase. Most of the time, single mutations confer only a modest reduction in drug susceptibility. Combination of several mutations is usually required to develop a high-level drug resistance. These mutations are predominantly found in clade B viruses and not in other genotypes. They are listed in the clade B representative isolate HXB2 (AC P04585).</text>
</comment>
<comment type="miscellaneous">
    <molecule>Isoform Gag-Pol polyprotein</molecule>
    <text>Produced by -1 ribosomal frameshifting.</text>
</comment>
<comment type="online information" name="HIV drug resistance mutations">
    <link uri="https://www.iasusa.org/hiv-drug-resistance/hiv-drug-resistance-mutations/"/>
</comment>
<comment type="online information" name="hivdb">
    <link uri="https://hivdb.stanford.edu"/>
    <text>HIV drug resistance database</text>
</comment>
<gene>
    <name type="primary">gag-pol</name>
</gene>
<reference key="1">
    <citation type="journal article" date="1990" name="AIDS Res. Hum. Retroviruses">
        <title>Nucleotide sequence of a Ugandan HIV-1 provirus reveals genetic diversity from other HIV-1 isolates.</title>
        <authorList>
            <person name="Oram J.D."/>
            <person name="Downing R.G."/>
            <person name="Roff M."/>
            <person name="Clegg J.C.S."/>
            <person name="Serwadda D."/>
            <person name="Carswell J.W."/>
        </authorList>
    </citation>
    <scope>NUCLEOTIDE SEQUENCE [GENOMIC DNA]</scope>
</reference>
<reference key="2">
    <citation type="journal article" date="1996" name="Curr. Top. Microbiol. Immunol.">
        <title>Proteolytic processing and particle maturation.</title>
        <authorList>
            <person name="Vogt V.M."/>
        </authorList>
    </citation>
    <scope>REVIEW</scope>
</reference>
<reference key="3">
    <citation type="journal article" date="1999" name="J. Mol. Biol.">
        <title>Structural biology of HIV.</title>
        <authorList>
            <person name="Turner B.G."/>
            <person name="Summers M.F."/>
        </authorList>
    </citation>
    <scope>REVIEW</scope>
</reference>
<reference key="4">
    <citation type="journal article" date="2001" name="Annu. Rev. Genet.">
        <title>Mechanisms of retroviral recombination.</title>
        <authorList>
            <person name="Negroni M."/>
            <person name="Buc H."/>
        </authorList>
    </citation>
    <scope>REVIEW</scope>
</reference>
<reference key="5">
    <citation type="journal article" date="2002" name="Genome Biol.">
        <title>Retroviral proteases.</title>
        <authorList>
            <person name="Dunn B.M."/>
            <person name="Goodenow M.M."/>
            <person name="Gustchina A."/>
            <person name="Wlodawer A."/>
        </authorList>
    </citation>
    <scope>REVIEW</scope>
</reference>
<reference key="6">
    <citation type="journal article" date="2003" name="Biochim. Biophys. Acta">
        <title>Role of HIV-1 Gag domains in viral assembly.</title>
        <authorList>
            <person name="Scarlata S."/>
            <person name="Carter C."/>
        </authorList>
    </citation>
    <scope>REVIEW</scope>
</reference>
<reference key="7">
    <citation type="journal article" date="1991" name="FEBS Lett.">
        <title>Structural characterization of a 39-residue synthetic peptide containing the two zinc binding domains from the HIV-1 p7 nucleocapsid protein by CD and NMR spectroscopy.</title>
        <authorList>
            <person name="Omichinski J.G."/>
            <person name="Clore G.M."/>
            <person name="Sakaguchi K."/>
            <person name="Appella E."/>
            <person name="Gronenborn A.M."/>
        </authorList>
    </citation>
    <scope>STRUCTURE BY NMR OF 405-422</scope>
</reference>
<accession>P24740</accession>
<dbReference type="EC" id="3.4.23.16"/>
<dbReference type="EC" id="2.7.7.49"/>
<dbReference type="EC" id="2.7.7.7"/>
<dbReference type="EC" id="3.1.26.13"/>
<dbReference type="EC" id="3.1.13.2"/>
<dbReference type="EC" id="2.7.7.-" evidence="5"/>
<dbReference type="EC" id="3.1.-.-" evidence="5"/>
<dbReference type="EMBL" id="M62320">
    <property type="protein sequence ID" value="AAA75019.1"/>
    <property type="status" value="ALT_SEQ"/>
    <property type="molecule type" value="Genomic_DNA"/>
</dbReference>
<dbReference type="PDB" id="1E27">
    <property type="method" value="X-ray"/>
    <property type="resolution" value="2.20 A"/>
    <property type="chains" value="C=1168-1176"/>
</dbReference>
<dbReference type="PDB" id="1NCP">
    <property type="method" value="NMR"/>
    <property type="chains" value="C=405-422"/>
</dbReference>
<dbReference type="PDB" id="3LZS">
    <property type="method" value="X-ray"/>
    <property type="resolution" value="1.95 A"/>
    <property type="chains" value="A/B=482-580"/>
</dbReference>
<dbReference type="PDB" id="3LZU">
    <property type="method" value="X-ray"/>
    <property type="resolution" value="1.76 A"/>
    <property type="chains" value="A/B=482-580"/>
</dbReference>
<dbReference type="PDBsum" id="1E27"/>
<dbReference type="PDBsum" id="1NCP"/>
<dbReference type="PDBsum" id="3LZS"/>
<dbReference type="PDBsum" id="3LZU"/>
<dbReference type="SMR" id="P24740"/>
<dbReference type="BindingDB" id="P24740"/>
<dbReference type="ChEMBL" id="CHEMBL3638352"/>
<dbReference type="MEROPS" id="A02.001"/>
<dbReference type="EvolutionaryTrace" id="P24740"/>
<dbReference type="PRO" id="PR:P24740"/>
<dbReference type="Proteomes" id="UP000134285">
    <property type="component" value="Segment"/>
</dbReference>
<dbReference type="GO" id="GO:0043657">
    <property type="term" value="C:host cell"/>
    <property type="evidence" value="ECO:0007669"/>
    <property type="project" value="GOC"/>
</dbReference>
<dbReference type="GO" id="GO:0042025">
    <property type="term" value="C:host cell nucleus"/>
    <property type="evidence" value="ECO:0007669"/>
    <property type="project" value="UniProtKB-SubCell"/>
</dbReference>
<dbReference type="GO" id="GO:0020002">
    <property type="term" value="C:host cell plasma membrane"/>
    <property type="evidence" value="ECO:0007669"/>
    <property type="project" value="UniProtKB-SubCell"/>
</dbReference>
<dbReference type="GO" id="GO:0072494">
    <property type="term" value="C:host multivesicular body"/>
    <property type="evidence" value="ECO:0007669"/>
    <property type="project" value="UniProtKB-SubCell"/>
</dbReference>
<dbReference type="GO" id="GO:0016020">
    <property type="term" value="C:membrane"/>
    <property type="evidence" value="ECO:0007669"/>
    <property type="project" value="UniProtKB-KW"/>
</dbReference>
<dbReference type="GO" id="GO:0019013">
    <property type="term" value="C:viral nucleocapsid"/>
    <property type="evidence" value="ECO:0007669"/>
    <property type="project" value="UniProtKB-KW"/>
</dbReference>
<dbReference type="GO" id="GO:0055036">
    <property type="term" value="C:virion membrane"/>
    <property type="evidence" value="ECO:0007669"/>
    <property type="project" value="UniProtKB-SubCell"/>
</dbReference>
<dbReference type="GO" id="GO:0004190">
    <property type="term" value="F:aspartic-type endopeptidase activity"/>
    <property type="evidence" value="ECO:0007669"/>
    <property type="project" value="UniProtKB-KW"/>
</dbReference>
<dbReference type="GO" id="GO:0003677">
    <property type="term" value="F:DNA binding"/>
    <property type="evidence" value="ECO:0007669"/>
    <property type="project" value="UniProtKB-KW"/>
</dbReference>
<dbReference type="GO" id="GO:0003887">
    <property type="term" value="F:DNA-directed DNA polymerase activity"/>
    <property type="evidence" value="ECO:0007669"/>
    <property type="project" value="UniProtKB-KW"/>
</dbReference>
<dbReference type="GO" id="GO:0004533">
    <property type="term" value="F:exoribonuclease H activity"/>
    <property type="evidence" value="ECO:0007669"/>
    <property type="project" value="UniProtKB-EC"/>
</dbReference>
<dbReference type="GO" id="GO:0008289">
    <property type="term" value="F:lipid binding"/>
    <property type="evidence" value="ECO:0007669"/>
    <property type="project" value="UniProtKB-KW"/>
</dbReference>
<dbReference type="GO" id="GO:0035613">
    <property type="term" value="F:RNA stem-loop binding"/>
    <property type="evidence" value="ECO:0007669"/>
    <property type="project" value="TreeGrafter"/>
</dbReference>
<dbReference type="GO" id="GO:0003964">
    <property type="term" value="F:RNA-directed DNA polymerase activity"/>
    <property type="evidence" value="ECO:0007669"/>
    <property type="project" value="UniProtKB-KW"/>
</dbReference>
<dbReference type="GO" id="GO:0004523">
    <property type="term" value="F:RNA-DNA hybrid ribonuclease activity"/>
    <property type="evidence" value="ECO:0007669"/>
    <property type="project" value="InterPro"/>
</dbReference>
<dbReference type="GO" id="GO:0005198">
    <property type="term" value="F:structural molecule activity"/>
    <property type="evidence" value="ECO:0007669"/>
    <property type="project" value="InterPro"/>
</dbReference>
<dbReference type="GO" id="GO:0008270">
    <property type="term" value="F:zinc ion binding"/>
    <property type="evidence" value="ECO:0007669"/>
    <property type="project" value="UniProtKB-KW"/>
</dbReference>
<dbReference type="GO" id="GO:0015074">
    <property type="term" value="P:DNA integration"/>
    <property type="evidence" value="ECO:0007669"/>
    <property type="project" value="UniProtKB-KW"/>
</dbReference>
<dbReference type="GO" id="GO:0006310">
    <property type="term" value="P:DNA recombination"/>
    <property type="evidence" value="ECO:0007669"/>
    <property type="project" value="UniProtKB-KW"/>
</dbReference>
<dbReference type="GO" id="GO:0075713">
    <property type="term" value="P:establishment of integrated proviral latency"/>
    <property type="evidence" value="ECO:0007669"/>
    <property type="project" value="UniProtKB-KW"/>
</dbReference>
<dbReference type="GO" id="GO:0006508">
    <property type="term" value="P:proteolysis"/>
    <property type="evidence" value="ECO:0007669"/>
    <property type="project" value="UniProtKB-KW"/>
</dbReference>
<dbReference type="GO" id="GO:0046718">
    <property type="term" value="P:symbiont entry into host cell"/>
    <property type="evidence" value="ECO:0007669"/>
    <property type="project" value="UniProtKB-KW"/>
</dbReference>
<dbReference type="GO" id="GO:0052151">
    <property type="term" value="P:symbiont-mediated activation of host apoptosis"/>
    <property type="evidence" value="ECO:0007669"/>
    <property type="project" value="UniProtKB-KW"/>
</dbReference>
<dbReference type="GO" id="GO:0039657">
    <property type="term" value="P:symbiont-mediated suppression of host gene expression"/>
    <property type="evidence" value="ECO:0007669"/>
    <property type="project" value="UniProtKB-KW"/>
</dbReference>
<dbReference type="GO" id="GO:0044826">
    <property type="term" value="P:viral genome integration into host DNA"/>
    <property type="evidence" value="ECO:0007669"/>
    <property type="project" value="UniProtKB-KW"/>
</dbReference>
<dbReference type="GO" id="GO:0075732">
    <property type="term" value="P:viral penetration into host nucleus"/>
    <property type="evidence" value="ECO:0007669"/>
    <property type="project" value="UniProtKB-KW"/>
</dbReference>
<dbReference type="GO" id="GO:0075523">
    <property type="term" value="P:viral translational frameshifting"/>
    <property type="evidence" value="ECO:0007669"/>
    <property type="project" value="UniProtKB-KW"/>
</dbReference>
<dbReference type="CDD" id="cd05482">
    <property type="entry name" value="HIV_retropepsin_like"/>
    <property type="match status" value="1"/>
</dbReference>
<dbReference type="CDD" id="cd01645">
    <property type="entry name" value="RT_Rtv"/>
    <property type="match status" value="1"/>
</dbReference>
<dbReference type="FunFam" id="1.10.1200.30:FF:000001">
    <property type="entry name" value="Gag polyprotein"/>
    <property type="match status" value="1"/>
</dbReference>
<dbReference type="FunFam" id="1.10.375.10:FF:000001">
    <property type="entry name" value="Gag polyprotein"/>
    <property type="match status" value="1"/>
</dbReference>
<dbReference type="FunFam" id="4.10.60.10:FF:000001">
    <property type="entry name" value="Gag polyprotein"/>
    <property type="match status" value="1"/>
</dbReference>
<dbReference type="FunFam" id="3.30.420.10:FF:000025">
    <property type="entry name" value="Gag-Pol polyprotein"/>
    <property type="match status" value="1"/>
</dbReference>
<dbReference type="FunFam" id="2.30.30.10:FF:000001">
    <property type="entry name" value="POL polyprotein"/>
    <property type="match status" value="1"/>
</dbReference>
<dbReference type="FunFam" id="3.30.420.10:FF:000017">
    <property type="entry name" value="POL polyprotein"/>
    <property type="match status" value="1"/>
</dbReference>
<dbReference type="FunFam" id="3.30.70.270:FF:000016">
    <property type="entry name" value="POL polyprotein"/>
    <property type="match status" value="1"/>
</dbReference>
<dbReference type="Gene3D" id="1.10.10.200">
    <property type="match status" value="1"/>
</dbReference>
<dbReference type="Gene3D" id="1.10.1200.30">
    <property type="match status" value="1"/>
</dbReference>
<dbReference type="Gene3D" id="3.30.70.270">
    <property type="match status" value="3"/>
</dbReference>
<dbReference type="Gene3D" id="2.40.70.10">
    <property type="entry name" value="Acid Proteases"/>
    <property type="match status" value="1"/>
</dbReference>
<dbReference type="Gene3D" id="3.10.10.10">
    <property type="entry name" value="HIV Type 1 Reverse Transcriptase, subunit A, domain 1"/>
    <property type="match status" value="1"/>
</dbReference>
<dbReference type="Gene3D" id="1.10.375.10">
    <property type="entry name" value="Human Immunodeficiency Virus Type 1 Capsid Protein"/>
    <property type="match status" value="1"/>
</dbReference>
<dbReference type="Gene3D" id="1.10.150.90">
    <property type="entry name" value="Immunodeficiency lentiviruses, gag gene matrix protein p17"/>
    <property type="match status" value="1"/>
</dbReference>
<dbReference type="Gene3D" id="2.30.30.10">
    <property type="entry name" value="Integrase, C-terminal domain superfamily, retroviral"/>
    <property type="match status" value="1"/>
</dbReference>
<dbReference type="Gene3D" id="3.30.420.10">
    <property type="entry name" value="Ribonuclease H-like superfamily/Ribonuclease H"/>
    <property type="match status" value="2"/>
</dbReference>
<dbReference type="Gene3D" id="1.20.5.760">
    <property type="entry name" value="Single helix bin"/>
    <property type="match status" value="1"/>
</dbReference>
<dbReference type="Gene3D" id="4.10.60.10">
    <property type="entry name" value="Zinc finger, CCHC-type"/>
    <property type="match status" value="1"/>
</dbReference>
<dbReference type="InterPro" id="IPR001969">
    <property type="entry name" value="Aspartic_peptidase_AS"/>
</dbReference>
<dbReference type="InterPro" id="IPR043502">
    <property type="entry name" value="DNA/RNA_pol_sf"/>
</dbReference>
<dbReference type="InterPro" id="IPR045345">
    <property type="entry name" value="Gag_p24_C"/>
</dbReference>
<dbReference type="InterPro" id="IPR017856">
    <property type="entry name" value="Integrase-like_N"/>
</dbReference>
<dbReference type="InterPro" id="IPR036862">
    <property type="entry name" value="Integrase_C_dom_sf_retrovir"/>
</dbReference>
<dbReference type="InterPro" id="IPR001037">
    <property type="entry name" value="Integrase_C_retrovir"/>
</dbReference>
<dbReference type="InterPro" id="IPR001584">
    <property type="entry name" value="Integrase_cat-core"/>
</dbReference>
<dbReference type="InterPro" id="IPR003308">
    <property type="entry name" value="Integrase_Zn-bd_dom_N"/>
</dbReference>
<dbReference type="InterPro" id="IPR000071">
    <property type="entry name" value="Lentvrl_matrix_N"/>
</dbReference>
<dbReference type="InterPro" id="IPR012344">
    <property type="entry name" value="Matrix_HIV/RSV_N"/>
</dbReference>
<dbReference type="InterPro" id="IPR001995">
    <property type="entry name" value="Peptidase_A2_cat"/>
</dbReference>
<dbReference type="InterPro" id="IPR021109">
    <property type="entry name" value="Peptidase_aspartic_dom_sf"/>
</dbReference>
<dbReference type="InterPro" id="IPR034170">
    <property type="entry name" value="Retropepsin-like_cat_dom"/>
</dbReference>
<dbReference type="InterPro" id="IPR018061">
    <property type="entry name" value="Retropepsins"/>
</dbReference>
<dbReference type="InterPro" id="IPR008916">
    <property type="entry name" value="Retrov_capsid_C"/>
</dbReference>
<dbReference type="InterPro" id="IPR008919">
    <property type="entry name" value="Retrov_capsid_N"/>
</dbReference>
<dbReference type="InterPro" id="IPR010999">
    <property type="entry name" value="Retrovr_matrix"/>
</dbReference>
<dbReference type="InterPro" id="IPR043128">
    <property type="entry name" value="Rev_trsase/Diguanyl_cyclase"/>
</dbReference>
<dbReference type="InterPro" id="IPR012337">
    <property type="entry name" value="RNaseH-like_sf"/>
</dbReference>
<dbReference type="InterPro" id="IPR002156">
    <property type="entry name" value="RNaseH_domain"/>
</dbReference>
<dbReference type="InterPro" id="IPR036397">
    <property type="entry name" value="RNaseH_sf"/>
</dbReference>
<dbReference type="InterPro" id="IPR000477">
    <property type="entry name" value="RT_dom"/>
</dbReference>
<dbReference type="InterPro" id="IPR010659">
    <property type="entry name" value="RVT_connect"/>
</dbReference>
<dbReference type="InterPro" id="IPR010661">
    <property type="entry name" value="RVT_thumb"/>
</dbReference>
<dbReference type="InterPro" id="IPR001878">
    <property type="entry name" value="Znf_CCHC"/>
</dbReference>
<dbReference type="InterPro" id="IPR036875">
    <property type="entry name" value="Znf_CCHC_sf"/>
</dbReference>
<dbReference type="PANTHER" id="PTHR41694">
    <property type="entry name" value="ENDOGENOUS RETROVIRUS GROUP K MEMBER POL PROTEIN"/>
    <property type="match status" value="1"/>
</dbReference>
<dbReference type="PANTHER" id="PTHR41694:SF3">
    <property type="entry name" value="RNA-DIRECTED DNA POLYMERASE-RELATED"/>
    <property type="match status" value="1"/>
</dbReference>
<dbReference type="Pfam" id="PF00540">
    <property type="entry name" value="Gag_p17"/>
    <property type="match status" value="1"/>
</dbReference>
<dbReference type="Pfam" id="PF19317">
    <property type="entry name" value="Gag_p24_C"/>
    <property type="match status" value="1"/>
</dbReference>
<dbReference type="Pfam" id="PF00552">
    <property type="entry name" value="IN_DBD_C"/>
    <property type="match status" value="1"/>
</dbReference>
<dbReference type="Pfam" id="PF02022">
    <property type="entry name" value="Integrase_Zn"/>
    <property type="match status" value="1"/>
</dbReference>
<dbReference type="Pfam" id="PF00075">
    <property type="entry name" value="RNase_H"/>
    <property type="match status" value="1"/>
</dbReference>
<dbReference type="Pfam" id="PF00665">
    <property type="entry name" value="rve"/>
    <property type="match status" value="1"/>
</dbReference>
<dbReference type="Pfam" id="PF00077">
    <property type="entry name" value="RVP"/>
    <property type="match status" value="1"/>
</dbReference>
<dbReference type="Pfam" id="PF00078">
    <property type="entry name" value="RVT_1"/>
    <property type="match status" value="1"/>
</dbReference>
<dbReference type="Pfam" id="PF06815">
    <property type="entry name" value="RVT_connect"/>
    <property type="match status" value="1"/>
</dbReference>
<dbReference type="Pfam" id="PF06817">
    <property type="entry name" value="RVT_thumb"/>
    <property type="match status" value="1"/>
</dbReference>
<dbReference type="Pfam" id="PF00098">
    <property type="entry name" value="zf-CCHC"/>
    <property type="match status" value="2"/>
</dbReference>
<dbReference type="PRINTS" id="PR00234">
    <property type="entry name" value="HIV1MATRIX"/>
</dbReference>
<dbReference type="SMART" id="SM00343">
    <property type="entry name" value="ZnF_C2HC"/>
    <property type="match status" value="2"/>
</dbReference>
<dbReference type="SUPFAM" id="SSF50630">
    <property type="entry name" value="Acid proteases"/>
    <property type="match status" value="1"/>
</dbReference>
<dbReference type="SUPFAM" id="SSF50122">
    <property type="entry name" value="DNA-binding domain of retroviral integrase"/>
    <property type="match status" value="1"/>
</dbReference>
<dbReference type="SUPFAM" id="SSF56672">
    <property type="entry name" value="DNA/RNA polymerases"/>
    <property type="match status" value="1"/>
</dbReference>
<dbReference type="SUPFAM" id="SSF46919">
    <property type="entry name" value="N-terminal Zn binding domain of HIV integrase"/>
    <property type="match status" value="1"/>
</dbReference>
<dbReference type="SUPFAM" id="SSF47836">
    <property type="entry name" value="Retroviral matrix proteins"/>
    <property type="match status" value="1"/>
</dbReference>
<dbReference type="SUPFAM" id="SSF47353">
    <property type="entry name" value="Retrovirus capsid dimerization domain-like"/>
    <property type="match status" value="1"/>
</dbReference>
<dbReference type="SUPFAM" id="SSF47943">
    <property type="entry name" value="Retrovirus capsid protein, N-terminal core domain"/>
    <property type="match status" value="1"/>
</dbReference>
<dbReference type="SUPFAM" id="SSF57756">
    <property type="entry name" value="Retrovirus zinc finger-like domains"/>
    <property type="match status" value="1"/>
</dbReference>
<dbReference type="SUPFAM" id="SSF53098">
    <property type="entry name" value="Ribonuclease H-like"/>
    <property type="match status" value="2"/>
</dbReference>
<dbReference type="PROSITE" id="PS50175">
    <property type="entry name" value="ASP_PROT_RETROV"/>
    <property type="match status" value="1"/>
</dbReference>
<dbReference type="PROSITE" id="PS00141">
    <property type="entry name" value="ASP_PROTEASE"/>
    <property type="match status" value="1"/>
</dbReference>
<dbReference type="PROSITE" id="PS50994">
    <property type="entry name" value="INTEGRASE"/>
    <property type="match status" value="1"/>
</dbReference>
<dbReference type="PROSITE" id="PS51027">
    <property type="entry name" value="INTEGRASE_DBD"/>
    <property type="match status" value="1"/>
</dbReference>
<dbReference type="PROSITE" id="PS50879">
    <property type="entry name" value="RNASE_H_1"/>
    <property type="match status" value="1"/>
</dbReference>
<dbReference type="PROSITE" id="PS50878">
    <property type="entry name" value="RT_POL"/>
    <property type="match status" value="1"/>
</dbReference>
<dbReference type="PROSITE" id="PS50158">
    <property type="entry name" value="ZF_CCHC"/>
    <property type="match status" value="2"/>
</dbReference>
<dbReference type="PROSITE" id="PS50876">
    <property type="entry name" value="ZF_INTEGRASE"/>
    <property type="match status" value="1"/>
</dbReference>
<keyword id="KW-0002">3D-structure</keyword>
<keyword id="KW-1073">Activation of host caspases by virus</keyword>
<keyword id="KW-0014">AIDS</keyword>
<keyword id="KW-0064">Aspartyl protease</keyword>
<keyword id="KW-0167">Capsid protein</keyword>
<keyword id="KW-0229">DNA integration</keyword>
<keyword id="KW-0233">DNA recombination</keyword>
<keyword id="KW-0238">DNA-binding</keyword>
<keyword id="KW-0239">DNA-directed DNA polymerase</keyword>
<keyword id="KW-0255">Endonuclease</keyword>
<keyword id="KW-1262">Eukaryotic host gene expression shutoff by virus</keyword>
<keyword id="KW-1193">Eukaryotic host translation shutoff by virus</keyword>
<keyword id="KW-1032">Host cell membrane</keyword>
<keyword id="KW-1035">Host cytoplasm</keyword>
<keyword id="KW-1039">Host endosome</keyword>
<keyword id="KW-1190">Host gene expression shutoff by virus</keyword>
<keyword id="KW-1043">Host membrane</keyword>
<keyword id="KW-1048">Host nucleus</keyword>
<keyword id="KW-0945">Host-virus interaction</keyword>
<keyword id="KW-0378">Hydrolase</keyword>
<keyword id="KW-0446">Lipid-binding</keyword>
<keyword id="KW-0449">Lipoprotein</keyword>
<keyword id="KW-0460">Magnesium</keyword>
<keyword id="KW-0472">Membrane</keyword>
<keyword id="KW-0479">Metal-binding</keyword>
<keyword id="KW-1119">Modulation of host cell apoptosis by virus</keyword>
<keyword id="KW-0511">Multifunctional enzyme</keyword>
<keyword id="KW-0519">Myristate</keyword>
<keyword id="KW-0540">Nuclease</keyword>
<keyword id="KW-0548">Nucleotidyltransferase</keyword>
<keyword id="KW-0597">Phosphoprotein</keyword>
<keyword id="KW-0645">Protease</keyword>
<keyword id="KW-1185">Reference proteome</keyword>
<keyword id="KW-0677">Repeat</keyword>
<keyword id="KW-0688">Ribosomal frameshifting</keyword>
<keyword id="KW-0694">RNA-binding</keyword>
<keyword id="KW-0695">RNA-directed DNA polymerase</keyword>
<keyword id="KW-0808">Transferase</keyword>
<keyword id="KW-1179">Viral genome integration</keyword>
<keyword id="KW-0543">Viral nucleoprotein</keyword>
<keyword id="KW-1163">Viral penetration into host nucleus</keyword>
<keyword id="KW-1188">Viral release from host cell</keyword>
<keyword id="KW-0946">Virion</keyword>
<keyword id="KW-0917">Virion maturation</keyword>
<keyword id="KW-1160">Virus entry into host cell</keyword>
<keyword id="KW-0862">Zinc</keyword>
<keyword id="KW-0863">Zinc-finger</keyword>
<organism>
    <name type="scientific">Human immunodeficiency virus type 1 group M subtype A (isolate U455)</name>
    <name type="common">HIV-1</name>
    <dbReference type="NCBI Taxonomy" id="11703"/>
    <lineage>
        <taxon>Viruses</taxon>
        <taxon>Riboviria</taxon>
        <taxon>Pararnavirae</taxon>
        <taxon>Artverviricota</taxon>
        <taxon>Revtraviricetes</taxon>
        <taxon>Ortervirales</taxon>
        <taxon>Retroviridae</taxon>
        <taxon>Orthoretrovirinae</taxon>
        <taxon>Lentivirus</taxon>
        <taxon>Human immunodeficiency virus type 1</taxon>
    </lineage>
</organism>
<sequence length="1428" mass="161103">MGARASVLSGKKLDSWEKIRLRPGGNKKYRLKHLVWASRELEKFTLNPGLLETAEGCQQILGQLQPALQTGTEELRSLYNTVAVLYCVHQRIDVKDTKEALNKIEEMQNKNKQRTQQAAANTGSSQNYPIVQNAQGQPVHQALSPRTLNAWVKVVEDKAFSPEVIPMFSALSEGATPQDLNMMLNVVGGHQAAMQMLKDTINEEAAEWDRLHPVHAGPIPPGQMREPRGSDIAGTTSTVQEQIGWMTGNPPIPVGDIYRRWIILGLNKIVRMYSPVSILDIRQGPKEPFRDYVDRFFKTLRAEQATQDVKNWMTETLLVQNANPDCKSILRALGPGATLEEMMTACQGVGGPGHKARVLAEAMSQVQQTSIMMQRGNFRGPRRIKCFNCGKEGHLAKNCRAPRKKGCWKCGKEGHQMKDCTERQANFLRENLAFQQGEAREFSSEQTRANSPTSRNLWDGGKDDLPCETGAERQGTDSFSFPQITLWQRPLVTVKIGGQLIEALLDTGADDTVLEDINLPGKWKPKIIGGIGGFIKVRQYDQILIEICGKKTIGTVLVGPTPVNIIGRNMLTQIGCTLNFPISPIETVPVKLKPEMDGPKVKQWPLTEEKIKALTEICNEMEKEGKISKIGPENPYNTPVFAIKKKDSTKWRKLVDFRELNKRTQDFWEVQLGIPHTAGLKKKKSVTVLDVGDAYFSVPLDESFRKYTAFTIPSINNETPGVRYQYNVLPQGWKGSPSIFQSSMTKILEPFRSQHPDIVIYQYMDDLYVGSDLEIGQHRAKIEELRAHLLSWGFITPDKKHQKEPPFLWMGYELHPDKWTVQPIQLPEKDSWTVNDIQKLVGKLNWASQIYAGIKVKQLCKLLRGAKALTDIVTLTEEAELELAENREILKDPVHGVYYDPSKDLVAEIQKQGQDQWTYQIYQEPFKNLKTGKYARKRSAHTNDVKQLTEVVQKVSTESIVIWGKIPKFRLPIQKETWEAWWMEYWQATWIPEWEFVNTPPLVKLWYQLEKDPIAGAETFYVDGAANRETKLGKAGYVTDRGRQKVVSLTETTNQKTELHAIHLALQDSGSEVNIVTDSQYALGIIQAQPDRSESEIVNQIIEKLIEKEKVYLSWVPAHKGIGGNEQVDKLVSSGIRKVLFLDGIDKAQEDHEKYHCNWRAMASDFNLPPVVAKEIVASCNKCQLKGEAMHGQVDCSPGIWQLDCTHLEGKVILVAVHVASGYIEAEVIPAETGQETAYFILKLAGRWPVKVIHTDNGSNFTSAAVKAVCWWANIQQEFGIPYNPQSQGVVESMNKELKKIIGQVREQAEHLKTAVQMAVFIHNFKRKGGIGGYSAGERIIDIIATDIQTKELQKQISKIQNFRVYYRDSRDPIWKGPAKLLWKGEGAVVIQDNSDIKVVPRRKAKIIRDYGKQMAGDDCMAGRQDED</sequence>
<organismHost>
    <name type="scientific">Homo sapiens</name>
    <name type="common">Human</name>
    <dbReference type="NCBI Taxonomy" id="9606"/>
</organismHost>